<comment type="function">
    <text evidence="1">One of the primary rRNA binding proteins, it binds directly to 16S rRNA where it helps nucleate assembly of the platform of the 30S subunit by binding and bridging several RNA helices of the 16S rRNA.</text>
</comment>
<comment type="function">
    <text evidence="1">Forms an intersubunit bridge (bridge B4) with the 23S rRNA of the 50S subunit in the ribosome.</text>
</comment>
<comment type="subunit">
    <text evidence="1">Part of the 30S ribosomal subunit. Forms a bridge to the 50S subunit in the 70S ribosome, contacting the 23S rRNA.</text>
</comment>
<comment type="similarity">
    <text evidence="1">Belongs to the universal ribosomal protein uS15 family.</text>
</comment>
<name>RS15_STRM5</name>
<keyword id="KW-0687">Ribonucleoprotein</keyword>
<keyword id="KW-0689">Ribosomal protein</keyword>
<keyword id="KW-0694">RNA-binding</keyword>
<keyword id="KW-0699">rRNA-binding</keyword>
<gene>
    <name evidence="1" type="primary">rpsO</name>
    <name type="ordered locus">Smal_2812</name>
</gene>
<proteinExistence type="inferred from homology"/>
<organism>
    <name type="scientific">Stenotrophomonas maltophilia (strain R551-3)</name>
    <dbReference type="NCBI Taxonomy" id="391008"/>
    <lineage>
        <taxon>Bacteria</taxon>
        <taxon>Pseudomonadati</taxon>
        <taxon>Pseudomonadota</taxon>
        <taxon>Gammaproteobacteria</taxon>
        <taxon>Lysobacterales</taxon>
        <taxon>Lysobacteraceae</taxon>
        <taxon>Stenotrophomonas</taxon>
        <taxon>Stenotrophomonas maltophilia group</taxon>
    </lineage>
</organism>
<accession>B4SQR7</accession>
<evidence type="ECO:0000255" key="1">
    <source>
        <dbReference type="HAMAP-Rule" id="MF_01343"/>
    </source>
</evidence>
<evidence type="ECO:0000256" key="2">
    <source>
        <dbReference type="SAM" id="MobiDB-lite"/>
    </source>
</evidence>
<evidence type="ECO:0000305" key="3"/>
<reference key="1">
    <citation type="submission" date="2008-06" db="EMBL/GenBank/DDBJ databases">
        <title>Complete sequence of Stenotrophomonas maltophilia R551-3.</title>
        <authorList>
            <consortium name="US DOE Joint Genome Institute"/>
            <person name="Lucas S."/>
            <person name="Copeland A."/>
            <person name="Lapidus A."/>
            <person name="Glavina del Rio T."/>
            <person name="Dalin E."/>
            <person name="Tice H."/>
            <person name="Pitluck S."/>
            <person name="Chain P."/>
            <person name="Malfatti S."/>
            <person name="Shin M."/>
            <person name="Vergez L."/>
            <person name="Lang D."/>
            <person name="Schmutz J."/>
            <person name="Larimer F."/>
            <person name="Land M."/>
            <person name="Hauser L."/>
            <person name="Kyrpides N."/>
            <person name="Mikhailova N."/>
            <person name="Taghavi S."/>
            <person name="Monchy S."/>
            <person name="Newman L."/>
            <person name="Vangronsveld J."/>
            <person name="van der Lelie D."/>
            <person name="Richardson P."/>
        </authorList>
    </citation>
    <scope>NUCLEOTIDE SEQUENCE [LARGE SCALE GENOMIC DNA]</scope>
    <source>
        <strain>R551-3</strain>
    </source>
</reference>
<sequence>MSIDTQKVIEDNKRSSADTGSPEVQVALLTARIELLTGHFKTHKKDHHSRRGLLQMVNRRRSLLDYLKKKDVERYKALIEKLGLRR</sequence>
<feature type="chain" id="PRO_1000143175" description="Small ribosomal subunit protein uS15">
    <location>
        <begin position="1"/>
        <end position="86"/>
    </location>
</feature>
<feature type="region of interest" description="Disordered" evidence="2">
    <location>
        <begin position="1"/>
        <end position="22"/>
    </location>
</feature>
<feature type="compositionally biased region" description="Basic and acidic residues" evidence="2">
    <location>
        <begin position="7"/>
        <end position="16"/>
    </location>
</feature>
<protein>
    <recommendedName>
        <fullName evidence="1">Small ribosomal subunit protein uS15</fullName>
    </recommendedName>
    <alternativeName>
        <fullName evidence="3">30S ribosomal protein S15</fullName>
    </alternativeName>
</protein>
<dbReference type="EMBL" id="CP001111">
    <property type="protein sequence ID" value="ACF52512.1"/>
    <property type="molecule type" value="Genomic_DNA"/>
</dbReference>
<dbReference type="RefSeq" id="WP_005410445.1">
    <property type="nucleotide sequence ID" value="NC_011071.1"/>
</dbReference>
<dbReference type="SMR" id="B4SQR7"/>
<dbReference type="STRING" id="391008.Smal_2812"/>
<dbReference type="GeneID" id="97223723"/>
<dbReference type="KEGG" id="smt:Smal_2812"/>
<dbReference type="eggNOG" id="COG0184">
    <property type="taxonomic scope" value="Bacteria"/>
</dbReference>
<dbReference type="HOGENOM" id="CLU_148518_1_0_6"/>
<dbReference type="OrthoDB" id="9799262at2"/>
<dbReference type="Proteomes" id="UP000001867">
    <property type="component" value="Chromosome"/>
</dbReference>
<dbReference type="GO" id="GO:0022627">
    <property type="term" value="C:cytosolic small ribosomal subunit"/>
    <property type="evidence" value="ECO:0007669"/>
    <property type="project" value="TreeGrafter"/>
</dbReference>
<dbReference type="GO" id="GO:0019843">
    <property type="term" value="F:rRNA binding"/>
    <property type="evidence" value="ECO:0007669"/>
    <property type="project" value="UniProtKB-UniRule"/>
</dbReference>
<dbReference type="GO" id="GO:0003735">
    <property type="term" value="F:structural constituent of ribosome"/>
    <property type="evidence" value="ECO:0007669"/>
    <property type="project" value="InterPro"/>
</dbReference>
<dbReference type="GO" id="GO:0006412">
    <property type="term" value="P:translation"/>
    <property type="evidence" value="ECO:0007669"/>
    <property type="project" value="UniProtKB-UniRule"/>
</dbReference>
<dbReference type="CDD" id="cd00353">
    <property type="entry name" value="Ribosomal_S15p_S13e"/>
    <property type="match status" value="1"/>
</dbReference>
<dbReference type="FunFam" id="1.10.287.10:FF:000002">
    <property type="entry name" value="30S ribosomal protein S15"/>
    <property type="match status" value="1"/>
</dbReference>
<dbReference type="Gene3D" id="6.10.250.3130">
    <property type="match status" value="1"/>
</dbReference>
<dbReference type="Gene3D" id="1.10.287.10">
    <property type="entry name" value="S15/NS1, RNA-binding"/>
    <property type="match status" value="1"/>
</dbReference>
<dbReference type="HAMAP" id="MF_01343_B">
    <property type="entry name" value="Ribosomal_uS15_B"/>
    <property type="match status" value="1"/>
</dbReference>
<dbReference type="InterPro" id="IPR000589">
    <property type="entry name" value="Ribosomal_uS15"/>
</dbReference>
<dbReference type="InterPro" id="IPR005290">
    <property type="entry name" value="Ribosomal_uS15_bac-type"/>
</dbReference>
<dbReference type="InterPro" id="IPR009068">
    <property type="entry name" value="uS15_NS1_RNA-bd_sf"/>
</dbReference>
<dbReference type="NCBIfam" id="TIGR00952">
    <property type="entry name" value="S15_bact"/>
    <property type="match status" value="1"/>
</dbReference>
<dbReference type="PANTHER" id="PTHR23321">
    <property type="entry name" value="RIBOSOMAL PROTEIN S15, BACTERIAL AND ORGANELLAR"/>
    <property type="match status" value="1"/>
</dbReference>
<dbReference type="PANTHER" id="PTHR23321:SF26">
    <property type="entry name" value="SMALL RIBOSOMAL SUBUNIT PROTEIN US15M"/>
    <property type="match status" value="1"/>
</dbReference>
<dbReference type="Pfam" id="PF00312">
    <property type="entry name" value="Ribosomal_S15"/>
    <property type="match status" value="1"/>
</dbReference>
<dbReference type="SMART" id="SM01387">
    <property type="entry name" value="Ribosomal_S15"/>
    <property type="match status" value="1"/>
</dbReference>
<dbReference type="SUPFAM" id="SSF47060">
    <property type="entry name" value="S15/NS1 RNA-binding domain"/>
    <property type="match status" value="1"/>
</dbReference>
<dbReference type="PROSITE" id="PS00362">
    <property type="entry name" value="RIBOSOMAL_S15"/>
    <property type="match status" value="1"/>
</dbReference>